<protein>
    <recommendedName>
        <fullName>Keratin, type II cuticular Hb2</fullName>
    </recommendedName>
    <alternativeName>
        <fullName>Keratin-82</fullName>
        <shortName>K82</shortName>
    </alternativeName>
    <alternativeName>
        <fullName>Type II hair keratin Hb2</fullName>
    </alternativeName>
    <alternativeName>
        <fullName>Type-II keratin Kb22</fullName>
    </alternativeName>
</protein>
<name>KRT82_MOUSE</name>
<dbReference type="EMBL" id="AY028606">
    <property type="protein sequence ID" value="AAK26232.1"/>
    <property type="molecule type" value="mRNA"/>
</dbReference>
<dbReference type="EMBL" id="BC108971">
    <property type="protein sequence ID" value="AAI08972.1"/>
    <property type="molecule type" value="mRNA"/>
</dbReference>
<dbReference type="CCDS" id="CCDS27854.1"/>
<dbReference type="RefSeq" id="NP_444479.2">
    <property type="nucleotide sequence ID" value="NM_053249.3"/>
</dbReference>
<dbReference type="SMR" id="Q99M74"/>
<dbReference type="BioGRID" id="227744">
    <property type="interactions" value="6"/>
</dbReference>
<dbReference type="ComplexPortal" id="CPX-5866">
    <property type="entry name" value="Keratin-80- Keratin-82 dimer complex"/>
</dbReference>
<dbReference type="FunCoup" id="Q99M74">
    <property type="interactions" value="27"/>
</dbReference>
<dbReference type="STRING" id="10090.ENSMUSP00000023713"/>
<dbReference type="iPTMnet" id="Q99M74"/>
<dbReference type="PhosphoSitePlus" id="Q99M74"/>
<dbReference type="jPOST" id="Q99M74"/>
<dbReference type="PaxDb" id="10090-ENSMUSP00000023713"/>
<dbReference type="PeptideAtlas" id="Q99M74"/>
<dbReference type="ProteomicsDB" id="263679"/>
<dbReference type="Antibodypedia" id="55914">
    <property type="antibodies" value="103 antibodies from 22 providers"/>
</dbReference>
<dbReference type="DNASU" id="114566"/>
<dbReference type="Ensembl" id="ENSMUST00000023713.10">
    <property type="protein sequence ID" value="ENSMUSP00000023713.8"/>
    <property type="gene ID" value="ENSMUSG00000049548.10"/>
</dbReference>
<dbReference type="GeneID" id="114566"/>
<dbReference type="KEGG" id="mmu:114566"/>
<dbReference type="UCSC" id="uc007xtn.3">
    <property type="organism name" value="mouse"/>
</dbReference>
<dbReference type="AGR" id="MGI:2149248"/>
<dbReference type="CTD" id="3888"/>
<dbReference type="MGI" id="MGI:2149248">
    <property type="gene designation" value="Krt82"/>
</dbReference>
<dbReference type="VEuPathDB" id="HostDB:ENSMUSG00000049548"/>
<dbReference type="eggNOG" id="ENOG502QWIE">
    <property type="taxonomic scope" value="Eukaryota"/>
</dbReference>
<dbReference type="GeneTree" id="ENSGT00940000161849"/>
<dbReference type="HOGENOM" id="CLU_012560_6_1_1"/>
<dbReference type="InParanoid" id="Q99M74"/>
<dbReference type="OMA" id="LPRMVTH"/>
<dbReference type="OrthoDB" id="2441647at2759"/>
<dbReference type="PhylomeDB" id="Q99M74"/>
<dbReference type="TreeFam" id="TF317854"/>
<dbReference type="Reactome" id="R-MMU-6805567">
    <property type="pathway name" value="Keratinization"/>
</dbReference>
<dbReference type="Reactome" id="R-MMU-6809371">
    <property type="pathway name" value="Formation of the cornified envelope"/>
</dbReference>
<dbReference type="BioGRID-ORCS" id="114566">
    <property type="hits" value="2 hits in 77 CRISPR screens"/>
</dbReference>
<dbReference type="PRO" id="PR:Q99M74"/>
<dbReference type="Proteomes" id="UP000000589">
    <property type="component" value="Chromosome 15"/>
</dbReference>
<dbReference type="RNAct" id="Q99M74">
    <property type="molecule type" value="protein"/>
</dbReference>
<dbReference type="Bgee" id="ENSMUSG00000049548">
    <property type="expression patterns" value="Expressed in lip and 8 other cell types or tissues"/>
</dbReference>
<dbReference type="GO" id="GO:0045095">
    <property type="term" value="C:keratin filament"/>
    <property type="evidence" value="ECO:0000303"/>
    <property type="project" value="ComplexPortal"/>
</dbReference>
<dbReference type="FunFam" id="1.20.5.1160:FF:000001">
    <property type="entry name" value="Keratin type II"/>
    <property type="match status" value="1"/>
</dbReference>
<dbReference type="FunFam" id="1.20.5.170:FF:000004">
    <property type="entry name" value="Keratin, type II cytoskeletal 5"/>
    <property type="match status" value="1"/>
</dbReference>
<dbReference type="FunFam" id="1.20.5.500:FF:000001">
    <property type="entry name" value="Type II keratin 23"/>
    <property type="match status" value="1"/>
</dbReference>
<dbReference type="Gene3D" id="1.20.5.170">
    <property type="match status" value="1"/>
</dbReference>
<dbReference type="Gene3D" id="1.20.5.500">
    <property type="entry name" value="Single helix bin"/>
    <property type="match status" value="1"/>
</dbReference>
<dbReference type="Gene3D" id="1.20.5.1160">
    <property type="entry name" value="Vasodilator-stimulated phosphoprotein"/>
    <property type="match status" value="1"/>
</dbReference>
<dbReference type="InterPro" id="IPR018039">
    <property type="entry name" value="IF_conserved"/>
</dbReference>
<dbReference type="InterPro" id="IPR039008">
    <property type="entry name" value="IF_rod_dom"/>
</dbReference>
<dbReference type="InterPro" id="IPR032444">
    <property type="entry name" value="Keratin_2_head"/>
</dbReference>
<dbReference type="InterPro" id="IPR003054">
    <property type="entry name" value="Keratin_II"/>
</dbReference>
<dbReference type="PANTHER" id="PTHR45616">
    <property type="entry name" value="GATA-TYPE DOMAIN-CONTAINING PROTEIN"/>
    <property type="match status" value="1"/>
</dbReference>
<dbReference type="PANTHER" id="PTHR45616:SF12">
    <property type="entry name" value="KERATIN, TYPE II CUTICULAR HB2"/>
    <property type="match status" value="1"/>
</dbReference>
<dbReference type="Pfam" id="PF00038">
    <property type="entry name" value="Filament"/>
    <property type="match status" value="1"/>
</dbReference>
<dbReference type="Pfam" id="PF16208">
    <property type="entry name" value="Keratin_2_head"/>
    <property type="match status" value="1"/>
</dbReference>
<dbReference type="PRINTS" id="PR01276">
    <property type="entry name" value="TYPE2KERATIN"/>
</dbReference>
<dbReference type="SMART" id="SM01391">
    <property type="entry name" value="Filament"/>
    <property type="match status" value="1"/>
</dbReference>
<dbReference type="SUPFAM" id="SSF64593">
    <property type="entry name" value="Intermediate filament protein, coiled coil region"/>
    <property type="match status" value="3"/>
</dbReference>
<dbReference type="PROSITE" id="PS00226">
    <property type="entry name" value="IF_ROD_1"/>
    <property type="match status" value="1"/>
</dbReference>
<dbReference type="PROSITE" id="PS51842">
    <property type="entry name" value="IF_ROD_2"/>
    <property type="match status" value="1"/>
</dbReference>
<sequence>MSCRNFQLSPRCGNRSFSSCSAIMPRMVTHYEVSKAPCRSGGGGGLRALGCLGSRSLCNVGFGRPRVASRCGMPGFGYRAGATCGSSACITPVTINESLLVPLELEIDPTVQRVKRDEKEQIKCLNNRFASFINKVRFLEQKNKLLETKWNFMQQQRSCQSNMEPLFEGYICALRRQLDCVSGDHGRLEAELCSLQEALEGYKKKYEEELSLRPCAENEFVTLKKDVDTAFLVKADLETNLEALEHEIEFLKALFEEEIGLLQSQISETSVIVKMDNSRELDVDGIVAEIKAQYDDIASRSKAEAEAWYQCRYEELRLTAGNHCDNLRNRKNEILEMNKLIQRLQQDIEAVKGQRCKLEGAIAQAEQQGEAALTDAKCKLAGLEEALQKAKQDMACLLKQYQEVMNCKLGLDIEIATYRRLLEGEEHRLCEGIGPVNISVSSSKGAVLYEPCVMGTPMLRTEYCTGTTGVLRNSGGCNVVGTGELYIPCEPQGLLGCGNGRSSSMKVGVGSNSCSR</sequence>
<evidence type="ECO:0000250" key="1"/>
<evidence type="ECO:0000255" key="2">
    <source>
        <dbReference type="PROSITE-ProRule" id="PRU01188"/>
    </source>
</evidence>
<evidence type="ECO:0000305" key="3"/>
<gene>
    <name type="primary">Krt82</name>
    <name type="synonym">Krt2-20</name>
    <name type="synonym">Krthb2</name>
</gene>
<proteinExistence type="evidence at protein level"/>
<feature type="chain" id="PRO_0000063698" description="Keratin, type II cuticular Hb2">
    <location>
        <begin position="1"/>
        <end position="516"/>
    </location>
</feature>
<feature type="domain" description="IF rod" evidence="2">
    <location>
        <begin position="118"/>
        <end position="429"/>
    </location>
</feature>
<feature type="region of interest" description="Head">
    <location>
        <begin position="1"/>
        <end position="118"/>
    </location>
</feature>
<feature type="region of interest" description="Coil 1A">
    <location>
        <begin position="119"/>
        <end position="153"/>
    </location>
</feature>
<feature type="region of interest" description="Linker 1">
    <location>
        <begin position="154"/>
        <end position="163"/>
    </location>
</feature>
<feature type="region of interest" description="Coil 1B">
    <location>
        <begin position="164"/>
        <end position="264"/>
    </location>
</feature>
<feature type="region of interest" description="Linker 12">
    <location>
        <begin position="265"/>
        <end position="281"/>
    </location>
</feature>
<feature type="region of interest" description="Coil 2">
    <location>
        <begin position="282"/>
        <end position="425"/>
    </location>
</feature>
<feature type="region of interest" description="Tail">
    <location>
        <begin position="426"/>
        <end position="516"/>
    </location>
</feature>
<feature type="sequence conflict" description="In Ref. 1; AAK26232." evidence="3" ref="1">
    <original>N</original>
    <variation>S</variation>
    <location>
        <position position="478"/>
    </location>
</feature>
<accession>Q99M74</accession>
<accession>Q32MV2</accession>
<organism>
    <name type="scientific">Mus musculus</name>
    <name type="common">Mouse</name>
    <dbReference type="NCBI Taxonomy" id="10090"/>
    <lineage>
        <taxon>Eukaryota</taxon>
        <taxon>Metazoa</taxon>
        <taxon>Chordata</taxon>
        <taxon>Craniata</taxon>
        <taxon>Vertebrata</taxon>
        <taxon>Euteleostomi</taxon>
        <taxon>Mammalia</taxon>
        <taxon>Eutheria</taxon>
        <taxon>Euarchontoglires</taxon>
        <taxon>Glires</taxon>
        <taxon>Rodentia</taxon>
        <taxon>Myomorpha</taxon>
        <taxon>Muroidea</taxon>
        <taxon>Muridae</taxon>
        <taxon>Murinae</taxon>
        <taxon>Mus</taxon>
        <taxon>Mus</taxon>
    </lineage>
</organism>
<keyword id="KW-0175">Coiled coil</keyword>
<keyword id="KW-0403">Intermediate filament</keyword>
<keyword id="KW-0416">Keratin</keyword>
<keyword id="KW-1185">Reference proteome</keyword>
<reference key="1">
    <citation type="journal article" date="2002" name="Genetics">
        <title>Hague (Hag): a new mouse hair mutation with an unstable semidominant allele.</title>
        <authorList>
            <person name="Poirier C."/>
            <person name="Yoshiki A."/>
            <person name="Fujiwara K."/>
            <person name="Guenet J.-L."/>
            <person name="Kusakabe M."/>
        </authorList>
    </citation>
    <scope>NUCLEOTIDE SEQUENCE [MRNA]</scope>
    <source>
        <strain>C3H/HeN</strain>
    </source>
</reference>
<reference key="2">
    <citation type="journal article" date="2004" name="Genome Res.">
        <title>The status, quality, and expansion of the NIH full-length cDNA project: the Mammalian Gene Collection (MGC).</title>
        <authorList>
            <consortium name="The MGC Project Team"/>
        </authorList>
    </citation>
    <scope>NUCLEOTIDE SEQUENCE [LARGE SCALE MRNA]</scope>
</reference>
<reference key="3">
    <citation type="journal article" date="2010" name="Cell">
        <title>A tissue-specific atlas of mouse protein phosphorylation and expression.</title>
        <authorList>
            <person name="Huttlin E.L."/>
            <person name="Jedrychowski M.P."/>
            <person name="Elias J.E."/>
            <person name="Goswami T."/>
            <person name="Rad R."/>
            <person name="Beausoleil S.A."/>
            <person name="Villen J."/>
            <person name="Haas W."/>
            <person name="Sowa M.E."/>
            <person name="Gygi S.P."/>
        </authorList>
    </citation>
    <scope>IDENTIFICATION BY MASS SPECTROMETRY [LARGE SCALE ANALYSIS]</scope>
    <source>
        <tissue>Heart</tissue>
        <tissue>Kidney</tissue>
        <tissue>Liver</tissue>
        <tissue>Lung</tissue>
    </source>
</reference>
<comment type="subunit">
    <text evidence="1">Heterotetramer of two type I and two type II keratins.</text>
</comment>
<comment type="miscellaneous">
    <text>There are two types of hair/microfibrillar keratin, I (acidic) and II (neutral to basic).</text>
</comment>
<comment type="similarity">
    <text evidence="2">Belongs to the intermediate filament family.</text>
</comment>